<keyword id="KW-0004">4Fe-4S</keyword>
<keyword id="KW-0028">Amino-acid biosynthesis</keyword>
<keyword id="KW-0100">Branched-chain amino acid biosynthesis</keyword>
<keyword id="KW-0408">Iron</keyword>
<keyword id="KW-0411">Iron-sulfur</keyword>
<keyword id="KW-0432">Leucine biosynthesis</keyword>
<keyword id="KW-0456">Lyase</keyword>
<keyword id="KW-0479">Metal-binding</keyword>
<keyword id="KW-1185">Reference proteome</keyword>
<accession>B8FMM4</accession>
<feature type="chain" id="PRO_1000135728" description="3-isopropylmalate dehydratase large subunit">
    <location>
        <begin position="1"/>
        <end position="419"/>
    </location>
</feature>
<feature type="binding site" evidence="1">
    <location>
        <position position="300"/>
    </location>
    <ligand>
        <name>[4Fe-4S] cluster</name>
        <dbReference type="ChEBI" id="CHEBI:49883"/>
    </ligand>
</feature>
<feature type="binding site" evidence="1">
    <location>
        <position position="360"/>
    </location>
    <ligand>
        <name>[4Fe-4S] cluster</name>
        <dbReference type="ChEBI" id="CHEBI:49883"/>
    </ligand>
</feature>
<feature type="binding site" evidence="1">
    <location>
        <position position="363"/>
    </location>
    <ligand>
        <name>[4Fe-4S] cluster</name>
        <dbReference type="ChEBI" id="CHEBI:49883"/>
    </ligand>
</feature>
<reference key="1">
    <citation type="journal article" date="2012" name="Environ. Microbiol.">
        <title>The genome sequence of Desulfatibacillum alkenivorans AK-01: a blueprint for anaerobic alkane oxidation.</title>
        <authorList>
            <person name="Callaghan A.V."/>
            <person name="Morris B.E."/>
            <person name="Pereira I.A."/>
            <person name="McInerney M.J."/>
            <person name="Austin R.N."/>
            <person name="Groves J.T."/>
            <person name="Kukor J.J."/>
            <person name="Suflita J.M."/>
            <person name="Young L.Y."/>
            <person name="Zylstra G.J."/>
            <person name="Wawrik B."/>
        </authorList>
    </citation>
    <scope>NUCLEOTIDE SEQUENCE [LARGE SCALE GENOMIC DNA]</scope>
    <source>
        <strain>AK-01</strain>
    </source>
</reference>
<dbReference type="EC" id="4.2.1.33" evidence="1"/>
<dbReference type="EMBL" id="CP001322">
    <property type="protein sequence ID" value="ACL01891.1"/>
    <property type="molecule type" value="Genomic_DNA"/>
</dbReference>
<dbReference type="RefSeq" id="WP_012609331.1">
    <property type="nucleotide sequence ID" value="NC_011768.1"/>
</dbReference>
<dbReference type="SMR" id="B8FMM4"/>
<dbReference type="KEGG" id="dal:Dalk_0181"/>
<dbReference type="eggNOG" id="COG0065">
    <property type="taxonomic scope" value="Bacteria"/>
</dbReference>
<dbReference type="HOGENOM" id="CLU_006714_3_4_7"/>
<dbReference type="UniPathway" id="UPA00048">
    <property type="reaction ID" value="UER00071"/>
</dbReference>
<dbReference type="Proteomes" id="UP000000739">
    <property type="component" value="Chromosome"/>
</dbReference>
<dbReference type="GO" id="GO:0003861">
    <property type="term" value="F:3-isopropylmalate dehydratase activity"/>
    <property type="evidence" value="ECO:0007669"/>
    <property type="project" value="UniProtKB-UniRule"/>
</dbReference>
<dbReference type="GO" id="GO:0051539">
    <property type="term" value="F:4 iron, 4 sulfur cluster binding"/>
    <property type="evidence" value="ECO:0007669"/>
    <property type="project" value="UniProtKB-KW"/>
</dbReference>
<dbReference type="GO" id="GO:0046872">
    <property type="term" value="F:metal ion binding"/>
    <property type="evidence" value="ECO:0007669"/>
    <property type="project" value="UniProtKB-KW"/>
</dbReference>
<dbReference type="GO" id="GO:0009098">
    <property type="term" value="P:L-leucine biosynthetic process"/>
    <property type="evidence" value="ECO:0007669"/>
    <property type="project" value="UniProtKB-UniRule"/>
</dbReference>
<dbReference type="CDD" id="cd01583">
    <property type="entry name" value="IPMI"/>
    <property type="match status" value="1"/>
</dbReference>
<dbReference type="Gene3D" id="3.30.499.10">
    <property type="entry name" value="Aconitase, domain 3"/>
    <property type="match status" value="2"/>
</dbReference>
<dbReference type="HAMAP" id="MF_01027">
    <property type="entry name" value="LeuC_type2"/>
    <property type="match status" value="1"/>
</dbReference>
<dbReference type="InterPro" id="IPR015931">
    <property type="entry name" value="Acnase/IPM_dHydase_lsu_aba_1/3"/>
</dbReference>
<dbReference type="InterPro" id="IPR001030">
    <property type="entry name" value="Acoase/IPM_deHydtase_lsu_aba"/>
</dbReference>
<dbReference type="InterPro" id="IPR018136">
    <property type="entry name" value="Aconitase_4Fe-4S_BS"/>
</dbReference>
<dbReference type="InterPro" id="IPR036008">
    <property type="entry name" value="Aconitase_4Fe-4S_dom"/>
</dbReference>
<dbReference type="InterPro" id="IPR011826">
    <property type="entry name" value="HAcnase/IPMdehydase_lsu_prok"/>
</dbReference>
<dbReference type="InterPro" id="IPR006251">
    <property type="entry name" value="Homoacnase/IPMdehydase_lsu"/>
</dbReference>
<dbReference type="InterPro" id="IPR050067">
    <property type="entry name" value="IPM_dehydratase_rel_enz"/>
</dbReference>
<dbReference type="InterPro" id="IPR033941">
    <property type="entry name" value="IPMI_cat"/>
</dbReference>
<dbReference type="InterPro" id="IPR011823">
    <property type="entry name" value="IsopropMal_deHydtase_lsu_bac"/>
</dbReference>
<dbReference type="NCBIfam" id="TIGR01343">
    <property type="entry name" value="hacA_fam"/>
    <property type="match status" value="1"/>
</dbReference>
<dbReference type="NCBIfam" id="TIGR02086">
    <property type="entry name" value="IPMI_arch"/>
    <property type="match status" value="1"/>
</dbReference>
<dbReference type="NCBIfam" id="TIGR02083">
    <property type="entry name" value="LEU2"/>
    <property type="match status" value="1"/>
</dbReference>
<dbReference type="NCBIfam" id="NF001614">
    <property type="entry name" value="PRK00402.1"/>
    <property type="match status" value="1"/>
</dbReference>
<dbReference type="PANTHER" id="PTHR43822:SF16">
    <property type="entry name" value="3-ISOPROPYLMALATE DEHYDRATASE LARGE SUBUNIT 2"/>
    <property type="match status" value="1"/>
</dbReference>
<dbReference type="PANTHER" id="PTHR43822">
    <property type="entry name" value="HOMOACONITASE, MITOCHONDRIAL-RELATED"/>
    <property type="match status" value="1"/>
</dbReference>
<dbReference type="Pfam" id="PF00330">
    <property type="entry name" value="Aconitase"/>
    <property type="match status" value="1"/>
</dbReference>
<dbReference type="PRINTS" id="PR00415">
    <property type="entry name" value="ACONITASE"/>
</dbReference>
<dbReference type="SUPFAM" id="SSF53732">
    <property type="entry name" value="Aconitase iron-sulfur domain"/>
    <property type="match status" value="1"/>
</dbReference>
<dbReference type="PROSITE" id="PS00450">
    <property type="entry name" value="ACONITASE_1"/>
    <property type="match status" value="1"/>
</dbReference>
<dbReference type="PROSITE" id="PS01244">
    <property type="entry name" value="ACONITASE_2"/>
    <property type="match status" value="1"/>
</dbReference>
<name>LEUC_DESAL</name>
<protein>
    <recommendedName>
        <fullName evidence="1">3-isopropylmalate dehydratase large subunit</fullName>
        <ecNumber evidence="1">4.2.1.33</ecNumber>
    </recommendedName>
    <alternativeName>
        <fullName evidence="1">Alpha-IPM isomerase</fullName>
        <shortName evidence="1">IPMI</shortName>
    </alternativeName>
    <alternativeName>
        <fullName evidence="1">Isopropylmalate isomerase</fullName>
    </alternativeName>
</protein>
<gene>
    <name evidence="1" type="primary">leuC</name>
    <name type="ordered locus">Dalk_0181</name>
</gene>
<sequence length="419" mass="44435">MGMTIAEKILAAHAGQEEASPGDLINAKVDIALGNDITAPIAIKLFRQSGAAKVFDKDRVVLVPDHFTPTKDINSAMQVKMVRDFAREQELSHWYEGGDSGVEHALLPEKGIVGPGDLVIGADSHTCTYGGLGAFATGVGSTDLAAAMITGEVWLKVPESIKFVYKGKLRPHVEGKDLILHTIGDIGVDGALYMAMEFTGEVIDALPMAERLTMANMAIEAGGKAGIIAPDAKTKEYADGRVIRKPVFYASDPDAKYAKVIEYDVTDLEPQVAFPHLPENTRPISQVGEVPIHQVIIGSCTNGRIEDMRSAARILTGNKADKNVRLIIIPATPQIYRQAMEEGLFDTFLSAGAVISPPTCGPCLGGHMGILAAGERAVATTNRNFVGRMGHVESEVYLANPAVAAASAIAGKIAGPDDI</sequence>
<proteinExistence type="inferred from homology"/>
<comment type="function">
    <text evidence="1">Catalyzes the isomerization between 2-isopropylmalate and 3-isopropylmalate, via the formation of 2-isopropylmaleate.</text>
</comment>
<comment type="catalytic activity">
    <reaction evidence="1">
        <text>(2R,3S)-3-isopropylmalate = (2S)-2-isopropylmalate</text>
        <dbReference type="Rhea" id="RHEA:32287"/>
        <dbReference type="ChEBI" id="CHEBI:1178"/>
        <dbReference type="ChEBI" id="CHEBI:35121"/>
        <dbReference type="EC" id="4.2.1.33"/>
    </reaction>
</comment>
<comment type="cofactor">
    <cofactor evidence="1">
        <name>[4Fe-4S] cluster</name>
        <dbReference type="ChEBI" id="CHEBI:49883"/>
    </cofactor>
    <text evidence="1">Binds 1 [4Fe-4S] cluster per subunit.</text>
</comment>
<comment type="pathway">
    <text evidence="1">Amino-acid biosynthesis; L-leucine biosynthesis; L-leucine from 3-methyl-2-oxobutanoate: step 2/4.</text>
</comment>
<comment type="subunit">
    <text evidence="1">Heterodimer of LeuC and LeuD.</text>
</comment>
<comment type="similarity">
    <text evidence="1">Belongs to the aconitase/IPM isomerase family. LeuC type 2 subfamily.</text>
</comment>
<organism>
    <name type="scientific">Desulfatibacillum aliphaticivorans</name>
    <dbReference type="NCBI Taxonomy" id="218208"/>
    <lineage>
        <taxon>Bacteria</taxon>
        <taxon>Pseudomonadati</taxon>
        <taxon>Thermodesulfobacteriota</taxon>
        <taxon>Desulfobacteria</taxon>
        <taxon>Desulfobacterales</taxon>
        <taxon>Desulfatibacillaceae</taxon>
        <taxon>Desulfatibacillum</taxon>
    </lineage>
</organism>
<evidence type="ECO:0000255" key="1">
    <source>
        <dbReference type="HAMAP-Rule" id="MF_01027"/>
    </source>
</evidence>